<gene>
    <name evidence="1" type="primary">bioB</name>
    <name type="ordered locus">SH0269</name>
</gene>
<proteinExistence type="inferred from homology"/>
<accession>Q4L9U7</accession>
<reference key="1">
    <citation type="journal article" date="2005" name="J. Bacteriol.">
        <title>Whole-genome sequencing of Staphylococcus haemolyticus uncovers the extreme plasticity of its genome and the evolution of human-colonizing staphylococcal species.</title>
        <authorList>
            <person name="Takeuchi F."/>
            <person name="Watanabe S."/>
            <person name="Baba T."/>
            <person name="Yuzawa H."/>
            <person name="Ito T."/>
            <person name="Morimoto Y."/>
            <person name="Kuroda M."/>
            <person name="Cui L."/>
            <person name="Takahashi M."/>
            <person name="Ankai A."/>
            <person name="Baba S."/>
            <person name="Fukui S."/>
            <person name="Lee J.C."/>
            <person name="Hiramatsu K."/>
        </authorList>
    </citation>
    <scope>NUCLEOTIDE SEQUENCE [LARGE SCALE GENOMIC DNA]</scope>
    <source>
        <strain>JCSC1435</strain>
    </source>
</reference>
<protein>
    <recommendedName>
        <fullName evidence="1">Biotin synthase</fullName>
        <ecNumber evidence="1">2.8.1.6</ecNumber>
    </recommendedName>
</protein>
<name>BIOB_STAHJ</name>
<organism>
    <name type="scientific">Staphylococcus haemolyticus (strain JCSC1435)</name>
    <dbReference type="NCBI Taxonomy" id="279808"/>
    <lineage>
        <taxon>Bacteria</taxon>
        <taxon>Bacillati</taxon>
        <taxon>Bacillota</taxon>
        <taxon>Bacilli</taxon>
        <taxon>Bacillales</taxon>
        <taxon>Staphylococcaceae</taxon>
        <taxon>Staphylococcus</taxon>
    </lineage>
</organism>
<keyword id="KW-0001">2Fe-2S</keyword>
<keyword id="KW-0004">4Fe-4S</keyword>
<keyword id="KW-0093">Biotin biosynthesis</keyword>
<keyword id="KW-0408">Iron</keyword>
<keyword id="KW-0411">Iron-sulfur</keyword>
<keyword id="KW-0479">Metal-binding</keyword>
<keyword id="KW-0949">S-adenosyl-L-methionine</keyword>
<keyword id="KW-0808">Transferase</keyword>
<feature type="chain" id="PRO_0000381659" description="Biotin synthase">
    <location>
        <begin position="1"/>
        <end position="321"/>
    </location>
</feature>
<feature type="domain" description="Radical SAM core" evidence="2">
    <location>
        <begin position="45"/>
        <end position="271"/>
    </location>
</feature>
<feature type="binding site" evidence="1">
    <location>
        <position position="63"/>
    </location>
    <ligand>
        <name>[4Fe-4S] cluster</name>
        <dbReference type="ChEBI" id="CHEBI:49883"/>
        <note>4Fe-4S-S-AdoMet</note>
    </ligand>
</feature>
<feature type="binding site" evidence="1">
    <location>
        <position position="67"/>
    </location>
    <ligand>
        <name>[4Fe-4S] cluster</name>
        <dbReference type="ChEBI" id="CHEBI:49883"/>
        <note>4Fe-4S-S-AdoMet</note>
    </ligand>
</feature>
<feature type="binding site" evidence="1">
    <location>
        <position position="70"/>
    </location>
    <ligand>
        <name>[4Fe-4S] cluster</name>
        <dbReference type="ChEBI" id="CHEBI:49883"/>
        <note>4Fe-4S-S-AdoMet</note>
    </ligand>
</feature>
<feature type="binding site" evidence="1">
    <location>
        <position position="106"/>
    </location>
    <ligand>
        <name>[2Fe-2S] cluster</name>
        <dbReference type="ChEBI" id="CHEBI:190135"/>
    </ligand>
</feature>
<feature type="binding site" evidence="1">
    <location>
        <position position="139"/>
    </location>
    <ligand>
        <name>[2Fe-2S] cluster</name>
        <dbReference type="ChEBI" id="CHEBI:190135"/>
    </ligand>
</feature>
<feature type="binding site" evidence="1">
    <location>
        <position position="199"/>
    </location>
    <ligand>
        <name>[2Fe-2S] cluster</name>
        <dbReference type="ChEBI" id="CHEBI:190135"/>
    </ligand>
</feature>
<feature type="binding site" evidence="1">
    <location>
        <position position="269"/>
    </location>
    <ligand>
        <name>[2Fe-2S] cluster</name>
        <dbReference type="ChEBI" id="CHEBI:190135"/>
    </ligand>
</feature>
<sequence>MRFNLAERILNQDVLSKDEALALFEDETIDTFELLNEAYIIRKHFFGKKVKLNMILNAKSGICSEDCGYCGQSVKMKEKQRYALVEPDKIKAGAQVATENHIGTYCIVMSGRGPTNREVDHICETVHDIKVLHPQLKICACLGLTNEEQAEKLKEAGVDRYNHNLNTSERYHNEVVTTHTYEDRVRTVEIMKANHISPCSGVICGMGETNEDIIDMAFALREIDADSIPINFLHPIKGTKFGGLDLLSPMKCLRIIAMFRLINPSKEIRIAGGREVNLRSLQAIALKAANSIFVGDYLITGGQPNELDYQMIEDLGFEIDG</sequence>
<evidence type="ECO:0000255" key="1">
    <source>
        <dbReference type="HAMAP-Rule" id="MF_01694"/>
    </source>
</evidence>
<evidence type="ECO:0000255" key="2">
    <source>
        <dbReference type="PROSITE-ProRule" id="PRU01266"/>
    </source>
</evidence>
<comment type="function">
    <text evidence="1">Catalyzes the conversion of dethiobiotin (DTB) to biotin by the insertion of a sulfur atom into dethiobiotin via a radical-based mechanism.</text>
</comment>
<comment type="catalytic activity">
    <reaction evidence="1">
        <text>(4R,5S)-dethiobiotin + (sulfur carrier)-SH + 2 reduced [2Fe-2S]-[ferredoxin] + 2 S-adenosyl-L-methionine = (sulfur carrier)-H + biotin + 2 5'-deoxyadenosine + 2 L-methionine + 2 oxidized [2Fe-2S]-[ferredoxin]</text>
        <dbReference type="Rhea" id="RHEA:22060"/>
        <dbReference type="Rhea" id="RHEA-COMP:10000"/>
        <dbReference type="Rhea" id="RHEA-COMP:10001"/>
        <dbReference type="Rhea" id="RHEA-COMP:14737"/>
        <dbReference type="Rhea" id="RHEA-COMP:14739"/>
        <dbReference type="ChEBI" id="CHEBI:17319"/>
        <dbReference type="ChEBI" id="CHEBI:29917"/>
        <dbReference type="ChEBI" id="CHEBI:33737"/>
        <dbReference type="ChEBI" id="CHEBI:33738"/>
        <dbReference type="ChEBI" id="CHEBI:57586"/>
        <dbReference type="ChEBI" id="CHEBI:57844"/>
        <dbReference type="ChEBI" id="CHEBI:59789"/>
        <dbReference type="ChEBI" id="CHEBI:64428"/>
        <dbReference type="ChEBI" id="CHEBI:149473"/>
        <dbReference type="EC" id="2.8.1.6"/>
    </reaction>
</comment>
<comment type="cofactor">
    <cofactor evidence="1">
        <name>[4Fe-4S] cluster</name>
        <dbReference type="ChEBI" id="CHEBI:49883"/>
    </cofactor>
    <text evidence="1">Binds 1 [4Fe-4S] cluster. The cluster is coordinated with 3 cysteines and an exchangeable S-adenosyl-L-methionine.</text>
</comment>
<comment type="cofactor">
    <cofactor evidence="1">
        <name>[2Fe-2S] cluster</name>
        <dbReference type="ChEBI" id="CHEBI:190135"/>
    </cofactor>
    <text evidence="1">Binds 1 [2Fe-2S] cluster. The cluster is coordinated with 3 cysteines and 1 arginine.</text>
</comment>
<comment type="pathway">
    <text evidence="1">Cofactor biosynthesis; biotin biosynthesis; biotin from 7,8-diaminononanoate: step 2/2.</text>
</comment>
<comment type="subunit">
    <text evidence="1">Homodimer.</text>
</comment>
<comment type="similarity">
    <text evidence="1">Belongs to the radical SAM superfamily. Biotin synthase family.</text>
</comment>
<dbReference type="EC" id="2.8.1.6" evidence="1"/>
<dbReference type="EMBL" id="AP006716">
    <property type="protein sequence ID" value="BAE03578.1"/>
    <property type="molecule type" value="Genomic_DNA"/>
</dbReference>
<dbReference type="RefSeq" id="WP_011274598.1">
    <property type="nucleotide sequence ID" value="NC_007168.1"/>
</dbReference>
<dbReference type="SMR" id="Q4L9U7"/>
<dbReference type="KEGG" id="sha:SH0269"/>
<dbReference type="eggNOG" id="COG0502">
    <property type="taxonomic scope" value="Bacteria"/>
</dbReference>
<dbReference type="HOGENOM" id="CLU_033172_2_1_9"/>
<dbReference type="OrthoDB" id="9786826at2"/>
<dbReference type="UniPathway" id="UPA00078">
    <property type="reaction ID" value="UER00162"/>
</dbReference>
<dbReference type="Proteomes" id="UP000000543">
    <property type="component" value="Chromosome"/>
</dbReference>
<dbReference type="GO" id="GO:0051537">
    <property type="term" value="F:2 iron, 2 sulfur cluster binding"/>
    <property type="evidence" value="ECO:0007669"/>
    <property type="project" value="UniProtKB-KW"/>
</dbReference>
<dbReference type="GO" id="GO:0051539">
    <property type="term" value="F:4 iron, 4 sulfur cluster binding"/>
    <property type="evidence" value="ECO:0007669"/>
    <property type="project" value="UniProtKB-KW"/>
</dbReference>
<dbReference type="GO" id="GO:0004076">
    <property type="term" value="F:biotin synthase activity"/>
    <property type="evidence" value="ECO:0007669"/>
    <property type="project" value="UniProtKB-UniRule"/>
</dbReference>
<dbReference type="GO" id="GO:0005506">
    <property type="term" value="F:iron ion binding"/>
    <property type="evidence" value="ECO:0007669"/>
    <property type="project" value="UniProtKB-UniRule"/>
</dbReference>
<dbReference type="GO" id="GO:0009102">
    <property type="term" value="P:biotin biosynthetic process"/>
    <property type="evidence" value="ECO:0007669"/>
    <property type="project" value="UniProtKB-UniRule"/>
</dbReference>
<dbReference type="CDD" id="cd01335">
    <property type="entry name" value="Radical_SAM"/>
    <property type="match status" value="1"/>
</dbReference>
<dbReference type="FunFam" id="3.20.20.70:FF:000026">
    <property type="entry name" value="Biotin synthase"/>
    <property type="match status" value="1"/>
</dbReference>
<dbReference type="Gene3D" id="3.20.20.70">
    <property type="entry name" value="Aldolase class I"/>
    <property type="match status" value="1"/>
</dbReference>
<dbReference type="HAMAP" id="MF_01694">
    <property type="entry name" value="BioB"/>
    <property type="match status" value="1"/>
</dbReference>
<dbReference type="InterPro" id="IPR013785">
    <property type="entry name" value="Aldolase_TIM"/>
</dbReference>
<dbReference type="InterPro" id="IPR010722">
    <property type="entry name" value="BATS_dom"/>
</dbReference>
<dbReference type="InterPro" id="IPR002684">
    <property type="entry name" value="Biotin_synth/BioAB"/>
</dbReference>
<dbReference type="InterPro" id="IPR024177">
    <property type="entry name" value="Biotin_synthase"/>
</dbReference>
<dbReference type="InterPro" id="IPR006638">
    <property type="entry name" value="Elp3/MiaA/NifB-like_rSAM"/>
</dbReference>
<dbReference type="InterPro" id="IPR007197">
    <property type="entry name" value="rSAM"/>
</dbReference>
<dbReference type="NCBIfam" id="TIGR00433">
    <property type="entry name" value="bioB"/>
    <property type="match status" value="1"/>
</dbReference>
<dbReference type="PANTHER" id="PTHR22976">
    <property type="entry name" value="BIOTIN SYNTHASE"/>
    <property type="match status" value="1"/>
</dbReference>
<dbReference type="PANTHER" id="PTHR22976:SF2">
    <property type="entry name" value="BIOTIN SYNTHASE, MITOCHONDRIAL"/>
    <property type="match status" value="1"/>
</dbReference>
<dbReference type="Pfam" id="PF06968">
    <property type="entry name" value="BATS"/>
    <property type="match status" value="1"/>
</dbReference>
<dbReference type="Pfam" id="PF04055">
    <property type="entry name" value="Radical_SAM"/>
    <property type="match status" value="1"/>
</dbReference>
<dbReference type="PIRSF" id="PIRSF001619">
    <property type="entry name" value="Biotin_synth"/>
    <property type="match status" value="1"/>
</dbReference>
<dbReference type="SFLD" id="SFLDG01278">
    <property type="entry name" value="biotin_synthase_like"/>
    <property type="match status" value="1"/>
</dbReference>
<dbReference type="SFLD" id="SFLDS00029">
    <property type="entry name" value="Radical_SAM"/>
    <property type="match status" value="1"/>
</dbReference>
<dbReference type="SMART" id="SM00876">
    <property type="entry name" value="BATS"/>
    <property type="match status" value="1"/>
</dbReference>
<dbReference type="SMART" id="SM00729">
    <property type="entry name" value="Elp3"/>
    <property type="match status" value="1"/>
</dbReference>
<dbReference type="SUPFAM" id="SSF102114">
    <property type="entry name" value="Radical SAM enzymes"/>
    <property type="match status" value="1"/>
</dbReference>
<dbReference type="PROSITE" id="PS51918">
    <property type="entry name" value="RADICAL_SAM"/>
    <property type="match status" value="1"/>
</dbReference>